<protein>
    <recommendedName>
        <fullName evidence="1">Thiazole synthase</fullName>
        <ecNumber evidence="1">2.8.1.10</ecNumber>
    </recommendedName>
</protein>
<proteinExistence type="inferred from homology"/>
<organism>
    <name type="scientific">Klebsiella pneumoniae (strain 342)</name>
    <dbReference type="NCBI Taxonomy" id="507522"/>
    <lineage>
        <taxon>Bacteria</taxon>
        <taxon>Pseudomonadati</taxon>
        <taxon>Pseudomonadota</taxon>
        <taxon>Gammaproteobacteria</taxon>
        <taxon>Enterobacterales</taxon>
        <taxon>Enterobacteriaceae</taxon>
        <taxon>Klebsiella/Raoultella group</taxon>
        <taxon>Klebsiella</taxon>
        <taxon>Klebsiella pneumoniae complex</taxon>
    </lineage>
</organism>
<comment type="function">
    <text evidence="1">Catalyzes the rearrangement of 1-deoxy-D-xylulose 5-phosphate (DXP) to produce the thiazole phosphate moiety of thiamine. Sulfur is provided by the thiocarboxylate moiety of the carrier protein ThiS. In vitro, sulfur can be provided by H(2)S.</text>
</comment>
<comment type="catalytic activity">
    <reaction evidence="1">
        <text>[ThiS sulfur-carrier protein]-C-terminal-Gly-aminoethanethioate + 2-iminoacetate + 1-deoxy-D-xylulose 5-phosphate = [ThiS sulfur-carrier protein]-C-terminal Gly-Gly + 2-[(2R,5Z)-2-carboxy-4-methylthiazol-5(2H)-ylidene]ethyl phosphate + 2 H2O + H(+)</text>
        <dbReference type="Rhea" id="RHEA:26297"/>
        <dbReference type="Rhea" id="RHEA-COMP:12909"/>
        <dbReference type="Rhea" id="RHEA-COMP:19908"/>
        <dbReference type="ChEBI" id="CHEBI:15377"/>
        <dbReference type="ChEBI" id="CHEBI:15378"/>
        <dbReference type="ChEBI" id="CHEBI:57792"/>
        <dbReference type="ChEBI" id="CHEBI:62899"/>
        <dbReference type="ChEBI" id="CHEBI:77846"/>
        <dbReference type="ChEBI" id="CHEBI:90778"/>
        <dbReference type="ChEBI" id="CHEBI:232372"/>
        <dbReference type="EC" id="2.8.1.10"/>
    </reaction>
</comment>
<comment type="pathway">
    <text evidence="1">Cofactor biosynthesis; thiamine diphosphate biosynthesis.</text>
</comment>
<comment type="subunit">
    <text evidence="1">Homotetramer. Forms heterodimers with either ThiH or ThiS.</text>
</comment>
<comment type="subcellular location">
    <subcellularLocation>
        <location evidence="1">Cytoplasm</location>
    </subcellularLocation>
</comment>
<comment type="similarity">
    <text evidence="1">Belongs to the ThiG family.</text>
</comment>
<feature type="chain" id="PRO_1000196869" description="Thiazole synthase">
    <location>
        <begin position="1"/>
        <end position="256"/>
    </location>
</feature>
<feature type="active site" description="Schiff-base intermediate with DXP" evidence="1">
    <location>
        <position position="95"/>
    </location>
</feature>
<feature type="binding site" evidence="1">
    <location>
        <position position="156"/>
    </location>
    <ligand>
        <name>1-deoxy-D-xylulose 5-phosphate</name>
        <dbReference type="ChEBI" id="CHEBI:57792"/>
    </ligand>
</feature>
<feature type="binding site" evidence="1">
    <location>
        <begin position="182"/>
        <end position="183"/>
    </location>
    <ligand>
        <name>1-deoxy-D-xylulose 5-phosphate</name>
        <dbReference type="ChEBI" id="CHEBI:57792"/>
    </ligand>
</feature>
<feature type="binding site" evidence="1">
    <location>
        <begin position="204"/>
        <end position="205"/>
    </location>
    <ligand>
        <name>1-deoxy-D-xylulose 5-phosphate</name>
        <dbReference type="ChEBI" id="CHEBI:57792"/>
    </ligand>
</feature>
<reference key="1">
    <citation type="journal article" date="2008" name="PLoS Genet.">
        <title>Complete genome sequence of the N2-fixing broad host range endophyte Klebsiella pneumoniae 342 and virulence predictions verified in mice.</title>
        <authorList>
            <person name="Fouts D.E."/>
            <person name="Tyler H.L."/>
            <person name="DeBoy R.T."/>
            <person name="Daugherty S."/>
            <person name="Ren Q."/>
            <person name="Badger J.H."/>
            <person name="Durkin A.S."/>
            <person name="Huot H."/>
            <person name="Shrivastava S."/>
            <person name="Kothari S."/>
            <person name="Dodson R.J."/>
            <person name="Mohamoud Y."/>
            <person name="Khouri H."/>
            <person name="Roesch L.F.W."/>
            <person name="Krogfelt K.A."/>
            <person name="Struve C."/>
            <person name="Triplett E.W."/>
            <person name="Methe B.A."/>
        </authorList>
    </citation>
    <scope>NUCLEOTIDE SEQUENCE [LARGE SCALE GENOMIC DNA]</scope>
    <source>
        <strain>342</strain>
    </source>
</reference>
<dbReference type="EC" id="2.8.1.10" evidence="1"/>
<dbReference type="EMBL" id="CP000964">
    <property type="protein sequence ID" value="ACI07630.1"/>
    <property type="molecule type" value="Genomic_DNA"/>
</dbReference>
<dbReference type="SMR" id="B5XYE8"/>
<dbReference type="KEGG" id="kpe:KPK_5302"/>
<dbReference type="HOGENOM" id="CLU_062233_1_0_6"/>
<dbReference type="UniPathway" id="UPA00060"/>
<dbReference type="Proteomes" id="UP000001734">
    <property type="component" value="Chromosome"/>
</dbReference>
<dbReference type="GO" id="GO:0005737">
    <property type="term" value="C:cytoplasm"/>
    <property type="evidence" value="ECO:0007669"/>
    <property type="project" value="UniProtKB-SubCell"/>
</dbReference>
<dbReference type="GO" id="GO:1990107">
    <property type="term" value="F:thiazole synthase activity"/>
    <property type="evidence" value="ECO:0007669"/>
    <property type="project" value="UniProtKB-EC"/>
</dbReference>
<dbReference type="GO" id="GO:0009229">
    <property type="term" value="P:thiamine diphosphate biosynthetic process"/>
    <property type="evidence" value="ECO:0007669"/>
    <property type="project" value="UniProtKB-UniRule"/>
</dbReference>
<dbReference type="CDD" id="cd04728">
    <property type="entry name" value="ThiG"/>
    <property type="match status" value="1"/>
</dbReference>
<dbReference type="FunFam" id="3.20.20.70:FF:000049">
    <property type="entry name" value="Thiazole synthase"/>
    <property type="match status" value="1"/>
</dbReference>
<dbReference type="Gene3D" id="3.20.20.70">
    <property type="entry name" value="Aldolase class I"/>
    <property type="match status" value="1"/>
</dbReference>
<dbReference type="HAMAP" id="MF_00443">
    <property type="entry name" value="ThiG"/>
    <property type="match status" value="1"/>
</dbReference>
<dbReference type="InterPro" id="IPR013785">
    <property type="entry name" value="Aldolase_TIM"/>
</dbReference>
<dbReference type="InterPro" id="IPR033983">
    <property type="entry name" value="Thiazole_synthase_ThiG"/>
</dbReference>
<dbReference type="InterPro" id="IPR008867">
    <property type="entry name" value="ThiG"/>
</dbReference>
<dbReference type="PANTHER" id="PTHR34266">
    <property type="entry name" value="THIAZOLE SYNTHASE"/>
    <property type="match status" value="1"/>
</dbReference>
<dbReference type="PANTHER" id="PTHR34266:SF2">
    <property type="entry name" value="THIAZOLE SYNTHASE"/>
    <property type="match status" value="1"/>
</dbReference>
<dbReference type="Pfam" id="PF05690">
    <property type="entry name" value="ThiG"/>
    <property type="match status" value="1"/>
</dbReference>
<dbReference type="SUPFAM" id="SSF110399">
    <property type="entry name" value="ThiG-like"/>
    <property type="match status" value="1"/>
</dbReference>
<name>THIG_KLEP3</name>
<evidence type="ECO:0000255" key="1">
    <source>
        <dbReference type="HAMAP-Rule" id="MF_00443"/>
    </source>
</evidence>
<sequence>MLRIADKTFESHLFTGTGKFAAPEVMVEAIRASGSQLVTLAMKRVDLRQHNDAILAPLLAAGVSLLPNTSGAKTAEEAVFAARLAREALGTHWLKLEIHPDARWLLPDPIETLKAAELLVCEGFVVLPYCGADPVLCKRLEEAGCAAVMPLGAPIGSNQGLETRAMLEIIIEQATVPVVVDAGIGVPSHAAQALEMGADAVLVNTAIAVADDPVTMARAFRMAVDAGLLARQAGPGARSTQAQATSPLTGFLEALA</sequence>
<accession>B5XYE8</accession>
<keyword id="KW-0963">Cytoplasm</keyword>
<keyword id="KW-0704">Schiff base</keyword>
<keyword id="KW-0784">Thiamine biosynthesis</keyword>
<keyword id="KW-0808">Transferase</keyword>
<gene>
    <name evidence="1" type="primary">thiG</name>
    <name type="ordered locus">KPK_5302</name>
</gene>